<comment type="function">
    <text evidence="1">Required for rescue of stalled ribosomes mediated by trans-translation. Binds to transfer-messenger RNA (tmRNA), required for stable association of tmRNA with ribosomes. tmRNA and SmpB together mimic tRNA shape, replacing the anticodon stem-loop with SmpB. tmRNA is encoded by the ssrA gene; the 2 termini fold to resemble tRNA(Ala) and it encodes a 'tag peptide', a short internal open reading frame. During trans-translation Ala-aminoacylated tmRNA acts like a tRNA, entering the A-site of stalled ribosomes, displacing the stalled mRNA. The ribosome then switches to translate the ORF on the tmRNA; the nascent peptide is terminated with the 'tag peptide' encoded by the tmRNA and targeted for degradation. The ribosome is freed to recommence translation, which seems to be the essential function of trans-translation.</text>
</comment>
<comment type="subcellular location">
    <subcellularLocation>
        <location evidence="1">Cytoplasm</location>
    </subcellularLocation>
    <text evidence="1">The tmRNA-SmpB complex associates with stalled 70S ribosomes.</text>
</comment>
<comment type="similarity">
    <text evidence="1">Belongs to the SmpB family.</text>
</comment>
<organism>
    <name type="scientific">Bacillus cereus (strain 03BB102)</name>
    <dbReference type="NCBI Taxonomy" id="572264"/>
    <lineage>
        <taxon>Bacteria</taxon>
        <taxon>Bacillati</taxon>
        <taxon>Bacillota</taxon>
        <taxon>Bacilli</taxon>
        <taxon>Bacillales</taxon>
        <taxon>Bacillaceae</taxon>
        <taxon>Bacillus</taxon>
        <taxon>Bacillus cereus group</taxon>
    </lineage>
</organism>
<keyword id="KW-0963">Cytoplasm</keyword>
<keyword id="KW-0694">RNA-binding</keyword>
<accession>C1EZ92</accession>
<gene>
    <name evidence="1" type="primary">smpB</name>
    <name type="ordered locus">BCA_5238</name>
</gene>
<name>SSRP_BACC3</name>
<protein>
    <recommendedName>
        <fullName evidence="1">SsrA-binding protein</fullName>
    </recommendedName>
    <alternativeName>
        <fullName evidence="1">Small protein B</fullName>
    </alternativeName>
</protein>
<reference key="1">
    <citation type="submission" date="2009-02" db="EMBL/GenBank/DDBJ databases">
        <title>Genome sequence of Bacillus cereus 03BB102.</title>
        <authorList>
            <person name="Dodson R.J."/>
            <person name="Jackson P."/>
            <person name="Munk A.C."/>
            <person name="Brettin T."/>
            <person name="Bruce D."/>
            <person name="Detter C."/>
            <person name="Tapia R."/>
            <person name="Han C."/>
            <person name="Sutton G."/>
            <person name="Sims D."/>
        </authorList>
    </citation>
    <scope>NUCLEOTIDE SEQUENCE [LARGE SCALE GENOMIC DNA]</scope>
    <source>
        <strain>03BB102</strain>
    </source>
</reference>
<sequence>MPKGSGKVIAQNKKAFHDYFIEETYEAGLVLQGTEIKSIRAGRVNLKDAFARVHNGEVWVHNMHISTYEQGNRFNHDPLRTRKLLLHKKEIEKLAGASKETGYALVPVRIYLKNGFAKMALGLAKGKKQYDKRHDLKEKEAKREIARAFRDRQKM</sequence>
<proteinExistence type="inferred from homology"/>
<feature type="chain" id="PRO_1000197606" description="SsrA-binding protein">
    <location>
        <begin position="1"/>
        <end position="155"/>
    </location>
</feature>
<dbReference type="EMBL" id="CP001407">
    <property type="protein sequence ID" value="ACO28851.1"/>
    <property type="molecule type" value="Genomic_DNA"/>
</dbReference>
<dbReference type="RefSeq" id="WP_001123905.1">
    <property type="nucleotide sequence ID" value="NZ_CP009318.1"/>
</dbReference>
<dbReference type="SMR" id="C1EZ92"/>
<dbReference type="GeneID" id="45024939"/>
<dbReference type="KEGG" id="bcx:BCA_5238"/>
<dbReference type="PATRIC" id="fig|572264.18.peg.5160"/>
<dbReference type="Proteomes" id="UP000002210">
    <property type="component" value="Chromosome"/>
</dbReference>
<dbReference type="GO" id="GO:0005829">
    <property type="term" value="C:cytosol"/>
    <property type="evidence" value="ECO:0007669"/>
    <property type="project" value="TreeGrafter"/>
</dbReference>
<dbReference type="GO" id="GO:0003723">
    <property type="term" value="F:RNA binding"/>
    <property type="evidence" value="ECO:0007669"/>
    <property type="project" value="UniProtKB-UniRule"/>
</dbReference>
<dbReference type="GO" id="GO:0070929">
    <property type="term" value="P:trans-translation"/>
    <property type="evidence" value="ECO:0007669"/>
    <property type="project" value="UniProtKB-UniRule"/>
</dbReference>
<dbReference type="CDD" id="cd09294">
    <property type="entry name" value="SmpB"/>
    <property type="match status" value="1"/>
</dbReference>
<dbReference type="Gene3D" id="2.40.280.10">
    <property type="match status" value="1"/>
</dbReference>
<dbReference type="HAMAP" id="MF_00023">
    <property type="entry name" value="SmpB"/>
    <property type="match status" value="1"/>
</dbReference>
<dbReference type="InterPro" id="IPR023620">
    <property type="entry name" value="SmpB"/>
</dbReference>
<dbReference type="InterPro" id="IPR000037">
    <property type="entry name" value="SsrA-bd_prot"/>
</dbReference>
<dbReference type="InterPro" id="IPR020081">
    <property type="entry name" value="SsrA-bd_prot_CS"/>
</dbReference>
<dbReference type="NCBIfam" id="NF003843">
    <property type="entry name" value="PRK05422.1"/>
    <property type="match status" value="1"/>
</dbReference>
<dbReference type="NCBIfam" id="TIGR00086">
    <property type="entry name" value="smpB"/>
    <property type="match status" value="1"/>
</dbReference>
<dbReference type="PANTHER" id="PTHR30308:SF2">
    <property type="entry name" value="SSRA-BINDING PROTEIN"/>
    <property type="match status" value="1"/>
</dbReference>
<dbReference type="PANTHER" id="PTHR30308">
    <property type="entry name" value="TMRNA-BINDING COMPONENT OF TRANS-TRANSLATION TAGGING COMPLEX"/>
    <property type="match status" value="1"/>
</dbReference>
<dbReference type="Pfam" id="PF01668">
    <property type="entry name" value="SmpB"/>
    <property type="match status" value="1"/>
</dbReference>
<dbReference type="SUPFAM" id="SSF74982">
    <property type="entry name" value="Small protein B (SmpB)"/>
    <property type="match status" value="1"/>
</dbReference>
<dbReference type="PROSITE" id="PS01317">
    <property type="entry name" value="SSRP"/>
    <property type="match status" value="1"/>
</dbReference>
<evidence type="ECO:0000255" key="1">
    <source>
        <dbReference type="HAMAP-Rule" id="MF_00023"/>
    </source>
</evidence>